<proteinExistence type="inferred from homology"/>
<dbReference type="EMBL" id="FM954972">
    <property type="protein sequence ID" value="CAV20199.1"/>
    <property type="molecule type" value="Genomic_DNA"/>
</dbReference>
<dbReference type="SMR" id="B7VLM7"/>
<dbReference type="STRING" id="575788.VS_2902"/>
<dbReference type="KEGG" id="vsp:VS_2902"/>
<dbReference type="PATRIC" id="fig|575788.5.peg.4112"/>
<dbReference type="eggNOG" id="COG1220">
    <property type="taxonomic scope" value="Bacteria"/>
</dbReference>
<dbReference type="HOGENOM" id="CLU_033123_0_0_6"/>
<dbReference type="Proteomes" id="UP000009100">
    <property type="component" value="Chromosome 1"/>
</dbReference>
<dbReference type="GO" id="GO:0009376">
    <property type="term" value="C:HslUV protease complex"/>
    <property type="evidence" value="ECO:0007669"/>
    <property type="project" value="UniProtKB-UniRule"/>
</dbReference>
<dbReference type="GO" id="GO:0005524">
    <property type="term" value="F:ATP binding"/>
    <property type="evidence" value="ECO:0007669"/>
    <property type="project" value="UniProtKB-UniRule"/>
</dbReference>
<dbReference type="GO" id="GO:0016887">
    <property type="term" value="F:ATP hydrolysis activity"/>
    <property type="evidence" value="ECO:0007669"/>
    <property type="project" value="InterPro"/>
</dbReference>
<dbReference type="GO" id="GO:0008233">
    <property type="term" value="F:peptidase activity"/>
    <property type="evidence" value="ECO:0007669"/>
    <property type="project" value="InterPro"/>
</dbReference>
<dbReference type="GO" id="GO:0036402">
    <property type="term" value="F:proteasome-activating activity"/>
    <property type="evidence" value="ECO:0007669"/>
    <property type="project" value="UniProtKB-UniRule"/>
</dbReference>
<dbReference type="GO" id="GO:0043335">
    <property type="term" value="P:protein unfolding"/>
    <property type="evidence" value="ECO:0007669"/>
    <property type="project" value="UniProtKB-UniRule"/>
</dbReference>
<dbReference type="GO" id="GO:0051603">
    <property type="term" value="P:proteolysis involved in protein catabolic process"/>
    <property type="evidence" value="ECO:0007669"/>
    <property type="project" value="TreeGrafter"/>
</dbReference>
<dbReference type="CDD" id="cd19498">
    <property type="entry name" value="RecA-like_HslU"/>
    <property type="match status" value="1"/>
</dbReference>
<dbReference type="FunFam" id="1.10.8.10:FF:000028">
    <property type="entry name" value="ATP-dependent protease ATPase subunit HslU"/>
    <property type="match status" value="1"/>
</dbReference>
<dbReference type="FunFam" id="1.10.8.60:FF:000027">
    <property type="entry name" value="ATP-dependent protease ATPase subunit HslU"/>
    <property type="match status" value="1"/>
</dbReference>
<dbReference type="FunFam" id="3.40.50.300:FF:000213">
    <property type="entry name" value="ATP-dependent protease ATPase subunit HslU"/>
    <property type="match status" value="1"/>
</dbReference>
<dbReference type="FunFam" id="3.40.50.300:FF:000220">
    <property type="entry name" value="ATP-dependent protease ATPase subunit HslU"/>
    <property type="match status" value="1"/>
</dbReference>
<dbReference type="Gene3D" id="1.10.8.60">
    <property type="match status" value="1"/>
</dbReference>
<dbReference type="Gene3D" id="3.40.50.300">
    <property type="entry name" value="P-loop containing nucleotide triphosphate hydrolases"/>
    <property type="match status" value="2"/>
</dbReference>
<dbReference type="HAMAP" id="MF_00249">
    <property type="entry name" value="HslU"/>
    <property type="match status" value="1"/>
</dbReference>
<dbReference type="InterPro" id="IPR003593">
    <property type="entry name" value="AAA+_ATPase"/>
</dbReference>
<dbReference type="InterPro" id="IPR050052">
    <property type="entry name" value="ATP-dep_Clp_protease_ClpX"/>
</dbReference>
<dbReference type="InterPro" id="IPR003959">
    <property type="entry name" value="ATPase_AAA_core"/>
</dbReference>
<dbReference type="InterPro" id="IPR019489">
    <property type="entry name" value="Clp_ATPase_C"/>
</dbReference>
<dbReference type="InterPro" id="IPR004491">
    <property type="entry name" value="HslU"/>
</dbReference>
<dbReference type="InterPro" id="IPR027417">
    <property type="entry name" value="P-loop_NTPase"/>
</dbReference>
<dbReference type="NCBIfam" id="TIGR00390">
    <property type="entry name" value="hslU"/>
    <property type="match status" value="1"/>
</dbReference>
<dbReference type="NCBIfam" id="NF003544">
    <property type="entry name" value="PRK05201.1"/>
    <property type="match status" value="1"/>
</dbReference>
<dbReference type="PANTHER" id="PTHR48102">
    <property type="entry name" value="ATP-DEPENDENT CLP PROTEASE ATP-BINDING SUBUNIT CLPX-LIKE, MITOCHONDRIAL-RELATED"/>
    <property type="match status" value="1"/>
</dbReference>
<dbReference type="PANTHER" id="PTHR48102:SF3">
    <property type="entry name" value="ATP-DEPENDENT PROTEASE ATPASE SUBUNIT HSLU"/>
    <property type="match status" value="1"/>
</dbReference>
<dbReference type="Pfam" id="PF00004">
    <property type="entry name" value="AAA"/>
    <property type="match status" value="1"/>
</dbReference>
<dbReference type="Pfam" id="PF07724">
    <property type="entry name" value="AAA_2"/>
    <property type="match status" value="1"/>
</dbReference>
<dbReference type="SMART" id="SM00382">
    <property type="entry name" value="AAA"/>
    <property type="match status" value="1"/>
</dbReference>
<dbReference type="SMART" id="SM01086">
    <property type="entry name" value="ClpB_D2-small"/>
    <property type="match status" value="1"/>
</dbReference>
<dbReference type="SUPFAM" id="SSF52540">
    <property type="entry name" value="P-loop containing nucleoside triphosphate hydrolases"/>
    <property type="match status" value="1"/>
</dbReference>
<feature type="chain" id="PRO_1000125456" description="ATP-dependent protease ATPase subunit HslU">
    <location>
        <begin position="1"/>
        <end position="446"/>
    </location>
</feature>
<feature type="binding site" evidence="1">
    <location>
        <position position="18"/>
    </location>
    <ligand>
        <name>ATP</name>
        <dbReference type="ChEBI" id="CHEBI:30616"/>
    </ligand>
</feature>
<feature type="binding site" evidence="1">
    <location>
        <begin position="60"/>
        <end position="65"/>
    </location>
    <ligand>
        <name>ATP</name>
        <dbReference type="ChEBI" id="CHEBI:30616"/>
    </ligand>
</feature>
<feature type="binding site" evidence="1">
    <location>
        <position position="259"/>
    </location>
    <ligand>
        <name>ATP</name>
        <dbReference type="ChEBI" id="CHEBI:30616"/>
    </ligand>
</feature>
<feature type="binding site" evidence="1">
    <location>
        <position position="324"/>
    </location>
    <ligand>
        <name>ATP</name>
        <dbReference type="ChEBI" id="CHEBI:30616"/>
    </ligand>
</feature>
<feature type="binding site" evidence="1">
    <location>
        <position position="396"/>
    </location>
    <ligand>
        <name>ATP</name>
        <dbReference type="ChEBI" id="CHEBI:30616"/>
    </ligand>
</feature>
<comment type="function">
    <text evidence="1">ATPase subunit of a proteasome-like degradation complex; this subunit has chaperone activity. The binding of ATP and its subsequent hydrolysis by HslU are essential for unfolding of protein substrates subsequently hydrolyzed by HslV. HslU recognizes the N-terminal part of its protein substrates and unfolds these before they are guided to HslV for hydrolysis.</text>
</comment>
<comment type="subunit">
    <text evidence="1">A double ring-shaped homohexamer of HslV is capped on each side by a ring-shaped HslU homohexamer. The assembly of the HslU/HslV complex is dependent on binding of ATP.</text>
</comment>
<comment type="subcellular location">
    <subcellularLocation>
        <location evidence="1">Cytoplasm</location>
    </subcellularLocation>
</comment>
<comment type="similarity">
    <text evidence="1">Belongs to the ClpX chaperone family. HslU subfamily.</text>
</comment>
<sequence length="446" mass="50225">MSEMTPREIVHELNRHIIGQDNAKRSVAIALRNRWRRMQLEESLRVEVSPKNILMIGPTGVGKTEIARRLAKLANAPFIKVEATKFTEVGYVGKEVETIIRDLTDVAIKMTHQQAMEKVQYRAEEQAEERILDALLPPARDAWGQNEQSTEDTTSSNTRQIFRKKLREGKLDDKEIEVDVAAPQMGVEIMSPPGMEEMTNQLQGMFQNLAGDTKKKRKMKIKDAFKALTEEEAAKLVNQEELKESAIFNAENNGIVFIDEIDKICKRGDSSGPDVSREGVQRDLLPLIEGSTVSTKHGMVKTDHILFITSGAFQVAKPSDLIPELQGRLPIRVELEALSAHDFKRILTEPKASLTEQYIALMKTEDVGIEFTEDGINQIADAAWRVNETTENIGARRLHTVMERLMDEISFDATDRAGSKLVIDEAYVISKLGELVEDEDLSRFIL</sequence>
<name>HSLU_VIBA3</name>
<organism>
    <name type="scientific">Vibrio atlanticus (strain LGP32)</name>
    <name type="common">Vibrio splendidus (strain Mel32)</name>
    <dbReference type="NCBI Taxonomy" id="575788"/>
    <lineage>
        <taxon>Bacteria</taxon>
        <taxon>Pseudomonadati</taxon>
        <taxon>Pseudomonadota</taxon>
        <taxon>Gammaproteobacteria</taxon>
        <taxon>Vibrionales</taxon>
        <taxon>Vibrionaceae</taxon>
        <taxon>Vibrio</taxon>
    </lineage>
</organism>
<evidence type="ECO:0000255" key="1">
    <source>
        <dbReference type="HAMAP-Rule" id="MF_00249"/>
    </source>
</evidence>
<gene>
    <name evidence="1" type="primary">hslU</name>
    <name type="ordered locus">VS_2902</name>
</gene>
<protein>
    <recommendedName>
        <fullName evidence="1">ATP-dependent protease ATPase subunit HslU</fullName>
    </recommendedName>
    <alternativeName>
        <fullName evidence="1">Unfoldase HslU</fullName>
    </alternativeName>
</protein>
<reference key="1">
    <citation type="submission" date="2009-02" db="EMBL/GenBank/DDBJ databases">
        <title>Vibrio splendidus str. LGP32 complete genome.</title>
        <authorList>
            <person name="Mazel D."/>
            <person name="Le Roux F."/>
        </authorList>
    </citation>
    <scope>NUCLEOTIDE SEQUENCE [LARGE SCALE GENOMIC DNA]</scope>
    <source>
        <strain>LGP32</strain>
    </source>
</reference>
<keyword id="KW-0067">ATP-binding</keyword>
<keyword id="KW-0143">Chaperone</keyword>
<keyword id="KW-0963">Cytoplasm</keyword>
<keyword id="KW-0547">Nucleotide-binding</keyword>
<accession>B7VLM7</accession>